<protein>
    <recommendedName>
        <fullName evidence="1">Methionine import ATP-binding protein MetN</fullName>
        <ecNumber evidence="1">7.4.2.11</ecNumber>
    </recommendedName>
</protein>
<gene>
    <name evidence="1" type="primary">metN</name>
    <name type="ordered locus">pc0455</name>
</gene>
<comment type="function">
    <text evidence="1">Part of the ABC transporter complex MetNIQ involved in methionine import. Responsible for energy coupling to the transport system.</text>
</comment>
<comment type="catalytic activity">
    <reaction evidence="1">
        <text>L-methionine(out) + ATP + H2O = L-methionine(in) + ADP + phosphate + H(+)</text>
        <dbReference type="Rhea" id="RHEA:29779"/>
        <dbReference type="ChEBI" id="CHEBI:15377"/>
        <dbReference type="ChEBI" id="CHEBI:15378"/>
        <dbReference type="ChEBI" id="CHEBI:30616"/>
        <dbReference type="ChEBI" id="CHEBI:43474"/>
        <dbReference type="ChEBI" id="CHEBI:57844"/>
        <dbReference type="ChEBI" id="CHEBI:456216"/>
        <dbReference type="EC" id="7.4.2.11"/>
    </reaction>
</comment>
<comment type="catalytic activity">
    <reaction evidence="1">
        <text>D-methionine(out) + ATP + H2O = D-methionine(in) + ADP + phosphate + H(+)</text>
        <dbReference type="Rhea" id="RHEA:29767"/>
        <dbReference type="ChEBI" id="CHEBI:15377"/>
        <dbReference type="ChEBI" id="CHEBI:15378"/>
        <dbReference type="ChEBI" id="CHEBI:30616"/>
        <dbReference type="ChEBI" id="CHEBI:43474"/>
        <dbReference type="ChEBI" id="CHEBI:57932"/>
        <dbReference type="ChEBI" id="CHEBI:456216"/>
        <dbReference type="EC" id="7.4.2.11"/>
    </reaction>
</comment>
<comment type="subunit">
    <text evidence="1">The complex is composed of two ATP-binding proteins (MetN), two transmembrane proteins (MetI) and a solute-binding protein (MetQ).</text>
</comment>
<comment type="subcellular location">
    <subcellularLocation>
        <location evidence="1">Cell inner membrane</location>
        <topology evidence="1">Peripheral membrane protein</topology>
    </subcellularLocation>
</comment>
<comment type="similarity">
    <text evidence="1">Belongs to the ABC transporter superfamily. Methionine importer (TC 3.A.1.24) family.</text>
</comment>
<name>METN_PARUW</name>
<evidence type="ECO:0000255" key="1">
    <source>
        <dbReference type="HAMAP-Rule" id="MF_01719"/>
    </source>
</evidence>
<keyword id="KW-0029">Amino-acid transport</keyword>
<keyword id="KW-0067">ATP-binding</keyword>
<keyword id="KW-0997">Cell inner membrane</keyword>
<keyword id="KW-1003">Cell membrane</keyword>
<keyword id="KW-0472">Membrane</keyword>
<keyword id="KW-0547">Nucleotide-binding</keyword>
<keyword id="KW-1185">Reference proteome</keyword>
<keyword id="KW-1278">Translocase</keyword>
<keyword id="KW-0813">Transport</keyword>
<proteinExistence type="inferred from homology"/>
<reference key="1">
    <citation type="journal article" date="2004" name="Science">
        <title>Illuminating the evolutionary history of chlamydiae.</title>
        <authorList>
            <person name="Horn M."/>
            <person name="Collingro A."/>
            <person name="Schmitz-Esser S."/>
            <person name="Beier C.L."/>
            <person name="Purkhold U."/>
            <person name="Fartmann B."/>
            <person name="Brandt P."/>
            <person name="Nyakatura G.J."/>
            <person name="Droege M."/>
            <person name="Frishman D."/>
            <person name="Rattei T."/>
            <person name="Mewes H.-W."/>
            <person name="Wagner M."/>
        </authorList>
    </citation>
    <scope>NUCLEOTIDE SEQUENCE [LARGE SCALE GENOMIC DNA]</scope>
    <source>
        <strain>UWE25</strain>
    </source>
</reference>
<accession>Q6ME20</accession>
<organism>
    <name type="scientific">Protochlamydia amoebophila (strain UWE25)</name>
    <dbReference type="NCBI Taxonomy" id="264201"/>
    <lineage>
        <taxon>Bacteria</taxon>
        <taxon>Pseudomonadati</taxon>
        <taxon>Chlamydiota</taxon>
        <taxon>Chlamydiia</taxon>
        <taxon>Parachlamydiales</taxon>
        <taxon>Parachlamydiaceae</taxon>
        <taxon>Candidatus Protochlamydia</taxon>
    </lineage>
</organism>
<feature type="chain" id="PRO_0000270344" description="Methionine import ATP-binding protein MetN">
    <location>
        <begin position="1"/>
        <end position="341"/>
    </location>
</feature>
<feature type="domain" description="ABC transporter" evidence="1">
    <location>
        <begin position="6"/>
        <end position="247"/>
    </location>
</feature>
<feature type="binding site" evidence="1">
    <location>
        <begin position="44"/>
        <end position="51"/>
    </location>
    <ligand>
        <name>ATP</name>
        <dbReference type="ChEBI" id="CHEBI:30616"/>
    </ligand>
</feature>
<sequence length="341" mass="38054">MKNYLIEIKKLSKNFLHSSSQHSTYALKDIDLAIPAGCIYGIIGMSGAGKSTLLRCINGLEAPSKGDILIEGKSLFQKNPAALRAIRQKMGMVFQHFQLFSSRTVAENIAYPMEIGFISQVFQEERINQLLNLVGLEQKKEIYPTSLSGGEKQRVGIARALANHPHILLCDEPTSALDPKTTRSILQLLAELNQKFGLTIIIITHQLETVKQICHRVAVLSEGEIVEEGEVKQVFIRPQHQATRHLLHLDGDQIPVDLIQQRNPDKLLVRLGFEGNQAKEPIISQLIKQFDIEVNILSGGLDYLQKTIVGNLFVEISGLPQNIQKAQAFLKSKQIICEIIL</sequence>
<dbReference type="EC" id="7.4.2.11" evidence="1"/>
<dbReference type="EMBL" id="BX908798">
    <property type="protein sequence ID" value="CAF23179.1"/>
    <property type="molecule type" value="Genomic_DNA"/>
</dbReference>
<dbReference type="RefSeq" id="WP_011175005.1">
    <property type="nucleotide sequence ID" value="NC_005861.2"/>
</dbReference>
<dbReference type="SMR" id="Q6ME20"/>
<dbReference type="STRING" id="264201.pc0455"/>
<dbReference type="KEGG" id="pcu:PC_RS02215"/>
<dbReference type="eggNOG" id="COG1135">
    <property type="taxonomic scope" value="Bacteria"/>
</dbReference>
<dbReference type="HOGENOM" id="CLU_000604_1_3_0"/>
<dbReference type="OrthoDB" id="9804199at2"/>
<dbReference type="Proteomes" id="UP000000529">
    <property type="component" value="Chromosome"/>
</dbReference>
<dbReference type="GO" id="GO:0005886">
    <property type="term" value="C:plasma membrane"/>
    <property type="evidence" value="ECO:0007669"/>
    <property type="project" value="UniProtKB-SubCell"/>
</dbReference>
<dbReference type="GO" id="GO:0033232">
    <property type="term" value="F:ABC-type D-methionine transporter activity"/>
    <property type="evidence" value="ECO:0007669"/>
    <property type="project" value="UniProtKB-EC"/>
</dbReference>
<dbReference type="GO" id="GO:0005524">
    <property type="term" value="F:ATP binding"/>
    <property type="evidence" value="ECO:0007669"/>
    <property type="project" value="UniProtKB-KW"/>
</dbReference>
<dbReference type="GO" id="GO:0016887">
    <property type="term" value="F:ATP hydrolysis activity"/>
    <property type="evidence" value="ECO:0007669"/>
    <property type="project" value="InterPro"/>
</dbReference>
<dbReference type="CDD" id="cd03258">
    <property type="entry name" value="ABC_MetN_methionine_transporter"/>
    <property type="match status" value="1"/>
</dbReference>
<dbReference type="FunFam" id="3.40.50.300:FF:000056">
    <property type="entry name" value="Cell division ATP-binding protein FtsE"/>
    <property type="match status" value="1"/>
</dbReference>
<dbReference type="Gene3D" id="3.30.70.260">
    <property type="match status" value="1"/>
</dbReference>
<dbReference type="Gene3D" id="3.40.50.300">
    <property type="entry name" value="P-loop containing nucleotide triphosphate hydrolases"/>
    <property type="match status" value="1"/>
</dbReference>
<dbReference type="InterPro" id="IPR003593">
    <property type="entry name" value="AAA+_ATPase"/>
</dbReference>
<dbReference type="InterPro" id="IPR003439">
    <property type="entry name" value="ABC_transporter-like_ATP-bd"/>
</dbReference>
<dbReference type="InterPro" id="IPR017871">
    <property type="entry name" value="ABC_transporter-like_CS"/>
</dbReference>
<dbReference type="InterPro" id="IPR045865">
    <property type="entry name" value="ACT-like_dom_sf"/>
</dbReference>
<dbReference type="InterPro" id="IPR041701">
    <property type="entry name" value="MetN_ABC"/>
</dbReference>
<dbReference type="InterPro" id="IPR050086">
    <property type="entry name" value="MetN_ABC_transporter-like"/>
</dbReference>
<dbReference type="InterPro" id="IPR018449">
    <property type="entry name" value="NIL_domain"/>
</dbReference>
<dbReference type="InterPro" id="IPR027417">
    <property type="entry name" value="P-loop_NTPase"/>
</dbReference>
<dbReference type="PANTHER" id="PTHR43166">
    <property type="entry name" value="AMINO ACID IMPORT ATP-BINDING PROTEIN"/>
    <property type="match status" value="1"/>
</dbReference>
<dbReference type="PANTHER" id="PTHR43166:SF30">
    <property type="entry name" value="METHIONINE IMPORT ATP-BINDING PROTEIN METN"/>
    <property type="match status" value="1"/>
</dbReference>
<dbReference type="Pfam" id="PF00005">
    <property type="entry name" value="ABC_tran"/>
    <property type="match status" value="1"/>
</dbReference>
<dbReference type="Pfam" id="PF09383">
    <property type="entry name" value="NIL"/>
    <property type="match status" value="1"/>
</dbReference>
<dbReference type="SMART" id="SM00382">
    <property type="entry name" value="AAA"/>
    <property type="match status" value="1"/>
</dbReference>
<dbReference type="SMART" id="SM00930">
    <property type="entry name" value="NIL"/>
    <property type="match status" value="1"/>
</dbReference>
<dbReference type="SUPFAM" id="SSF55021">
    <property type="entry name" value="ACT-like"/>
    <property type="match status" value="1"/>
</dbReference>
<dbReference type="SUPFAM" id="SSF52540">
    <property type="entry name" value="P-loop containing nucleoside triphosphate hydrolases"/>
    <property type="match status" value="1"/>
</dbReference>
<dbReference type="PROSITE" id="PS00211">
    <property type="entry name" value="ABC_TRANSPORTER_1"/>
    <property type="match status" value="1"/>
</dbReference>
<dbReference type="PROSITE" id="PS50893">
    <property type="entry name" value="ABC_TRANSPORTER_2"/>
    <property type="match status" value="1"/>
</dbReference>
<dbReference type="PROSITE" id="PS51264">
    <property type="entry name" value="METN"/>
    <property type="match status" value="1"/>
</dbReference>